<protein>
    <recommendedName>
        <fullName>V-type proton ATPase 16 kDa proteolipid subunit</fullName>
        <shortName>V-ATPase 16 kDa proteolipid subunit</shortName>
    </recommendedName>
    <alternativeName>
        <fullName>Vacuolar proton pump 16 kDa proteolipid subunit</fullName>
    </alternativeName>
</protein>
<reference key="1">
    <citation type="online journal article" date="1996" name="Plant Gene Register">
        <title>A gene encoding the 16 kD proteolipid subunit of a vacuolar-type H(+)-ATPase from Pleurochrysis carterae strain 136.</title>
        <authorList>
            <person name="Corstjens P.L.A.M."/>
            <person name="Araki Y."/>
            <person name="Westbroek P."/>
            <person name="Gonzalez E.L."/>
        </authorList>
        <locator>PGR96-038</locator>
    </citation>
    <scope>NUCLEOTIDE SEQUENCE [MRNA]</scope>
    <source>
        <strain>136</strain>
    </source>
</reference>
<reference key="2">
    <citation type="submission" date="1996-12" db="EMBL/GenBank/DDBJ databases">
        <authorList>
            <person name="Corstjens P.L.A.M."/>
            <person name="Gonzalez E.L."/>
        </authorList>
    </citation>
    <scope>NUCLEOTIDE SEQUENCE</scope>
    <source>
        <strain>136</strain>
    </source>
</reference>
<proteinExistence type="evidence at transcript level"/>
<feature type="chain" id="PRO_0000071775" description="V-type proton ATPase 16 kDa proteolipid subunit">
    <location>
        <begin position="1"/>
        <end position="164"/>
    </location>
</feature>
<feature type="topological domain" description="Lumenal" evidence="2">
    <location>
        <begin position="1"/>
        <end position="10"/>
    </location>
</feature>
<feature type="transmembrane region" description="Helical" evidence="2">
    <location>
        <begin position="11"/>
        <end position="31"/>
    </location>
</feature>
<feature type="topological domain" description="Cytoplasmic" evidence="2">
    <location>
        <begin position="32"/>
        <end position="53"/>
    </location>
</feature>
<feature type="transmembrane region" description="Helical" evidence="2">
    <location>
        <begin position="54"/>
        <end position="74"/>
    </location>
</feature>
<feature type="topological domain" description="Lumenal" evidence="2">
    <location>
        <begin position="75"/>
        <end position="96"/>
    </location>
</feature>
<feature type="transmembrane region" description="Helical" evidence="2">
    <location>
        <begin position="97"/>
        <end position="118"/>
    </location>
</feature>
<feature type="topological domain" description="Cytoplasmic" evidence="2">
    <location>
        <begin position="119"/>
        <end position="130"/>
    </location>
</feature>
<feature type="transmembrane region" description="Helical" evidence="2">
    <location>
        <begin position="131"/>
        <end position="155"/>
    </location>
</feature>
<feature type="topological domain" description="Lumenal" evidence="2">
    <location>
        <begin position="156"/>
        <end position="164"/>
    </location>
</feature>
<feature type="site" description="Essential for proton translocation" evidence="1">
    <location>
        <position position="143"/>
    </location>
</feature>
<gene>
    <name type="primary">VAP</name>
</gene>
<dbReference type="EMBL" id="U48365">
    <property type="protein sequence ID" value="AAB67833.1"/>
    <property type="molecule type" value="mRNA"/>
</dbReference>
<dbReference type="EMBL" id="U53182">
    <property type="protein sequence ID" value="AAB67834.1"/>
    <property type="molecule type" value="mRNA"/>
</dbReference>
<dbReference type="EMBL" id="U81519">
    <property type="protein sequence ID" value="AAB58498.1"/>
    <property type="molecule type" value="Transcribed_RNA"/>
</dbReference>
<dbReference type="SMR" id="Q43362"/>
<dbReference type="GO" id="GO:0033179">
    <property type="term" value="C:proton-transporting V-type ATPase, V0 domain"/>
    <property type="evidence" value="ECO:0007669"/>
    <property type="project" value="InterPro"/>
</dbReference>
<dbReference type="GO" id="GO:0005774">
    <property type="term" value="C:vacuolar membrane"/>
    <property type="evidence" value="ECO:0007669"/>
    <property type="project" value="UniProtKB-SubCell"/>
</dbReference>
<dbReference type="GO" id="GO:0046961">
    <property type="term" value="F:proton-transporting ATPase activity, rotational mechanism"/>
    <property type="evidence" value="ECO:0007669"/>
    <property type="project" value="InterPro"/>
</dbReference>
<dbReference type="CDD" id="cd18175">
    <property type="entry name" value="ATP-synt_Vo_c_ATP6C_rpt1"/>
    <property type="match status" value="1"/>
</dbReference>
<dbReference type="CDD" id="cd18176">
    <property type="entry name" value="ATP-synt_Vo_c_ATP6C_rpt2"/>
    <property type="match status" value="1"/>
</dbReference>
<dbReference type="FunFam" id="1.20.120.610:FF:000003">
    <property type="entry name" value="V-type proton ATPase proteolipid subunit"/>
    <property type="match status" value="1"/>
</dbReference>
<dbReference type="Gene3D" id="1.20.120.610">
    <property type="entry name" value="lithium bound rotor ring of v- atpase"/>
    <property type="match status" value="1"/>
</dbReference>
<dbReference type="InterPro" id="IPR002379">
    <property type="entry name" value="ATPase_proteolipid_c-like_dom"/>
</dbReference>
<dbReference type="InterPro" id="IPR000245">
    <property type="entry name" value="ATPase_proteolipid_csu"/>
</dbReference>
<dbReference type="InterPro" id="IPR011555">
    <property type="entry name" value="ATPase_proteolipid_su_C_euk"/>
</dbReference>
<dbReference type="InterPro" id="IPR035921">
    <property type="entry name" value="F/V-ATP_Csub_sf"/>
</dbReference>
<dbReference type="NCBIfam" id="TIGR01100">
    <property type="entry name" value="V_ATP_synt_C"/>
    <property type="match status" value="1"/>
</dbReference>
<dbReference type="PANTHER" id="PTHR10263">
    <property type="entry name" value="V-TYPE PROTON ATPASE PROTEOLIPID SUBUNIT"/>
    <property type="match status" value="1"/>
</dbReference>
<dbReference type="Pfam" id="PF00137">
    <property type="entry name" value="ATP-synt_C"/>
    <property type="match status" value="2"/>
</dbReference>
<dbReference type="PRINTS" id="PR00122">
    <property type="entry name" value="VACATPASE"/>
</dbReference>
<dbReference type="SUPFAM" id="SSF81333">
    <property type="entry name" value="F1F0 ATP synthase subunit C"/>
    <property type="match status" value="2"/>
</dbReference>
<organism>
    <name type="scientific">Chrysotila carterae</name>
    <name type="common">Marine alga</name>
    <name type="synonym">Syracosphaera carterae</name>
    <dbReference type="NCBI Taxonomy" id="13221"/>
    <lineage>
        <taxon>Eukaryota</taxon>
        <taxon>Haptista</taxon>
        <taxon>Haptophyta</taxon>
        <taxon>Prymnesiophyceae</taxon>
        <taxon>Isochrysidales</taxon>
        <taxon>Isochrysidaceae</taxon>
        <taxon>Chrysotila</taxon>
    </lineage>
</organism>
<accession>Q43362</accession>
<accession>O04754</accession>
<sequence length="164" mass="16252">MSDLCPPTAPFFGFMGAAVALIFANLGAAYGTAKSGVGVSSMGVMKPDLVMKSIIPVVMAGVLGIYGLIIAVIIGNGVKGPEGGKPQYSSFTGFAHLAAGLACGLSGMAAGIAIGIVGDAGVRASAQQAKLYVGMVLILIFAEALGLYGLIVGLILTSKEAPCS</sequence>
<name>VATL_CHRCT</name>
<evidence type="ECO:0000250" key="1"/>
<evidence type="ECO:0000255" key="2"/>
<evidence type="ECO:0000305" key="3"/>
<comment type="function">
    <text>Proton-conducting pore forming subunit of the membrane integral V0 complex of vacuolar ATPase. V-ATPase is responsible for acidifying a variety of intracellular compartments in eukaryotic cells.</text>
</comment>
<comment type="subunit">
    <text>V-ATPase is a heteromultimeric enzyme composed of a peripheral catalytic V1 complex (main components: subunits A, B, C, D, E, and F) attached to an integral membrane V0 proton pore complex (main component: the proteolipid protein; which is present as a hexamer that forms the proton-conducting pore).</text>
</comment>
<comment type="subcellular location">
    <subcellularLocation>
        <location>Vacuole membrane</location>
        <topology>Multi-pass membrane protein</topology>
    </subcellularLocation>
</comment>
<comment type="similarity">
    <text evidence="3">Belongs to the V-ATPase proteolipid subunit family.</text>
</comment>
<keyword id="KW-0375">Hydrogen ion transport</keyword>
<keyword id="KW-0406">Ion transport</keyword>
<keyword id="KW-0472">Membrane</keyword>
<keyword id="KW-0812">Transmembrane</keyword>
<keyword id="KW-1133">Transmembrane helix</keyword>
<keyword id="KW-0813">Transport</keyword>
<keyword id="KW-0926">Vacuole</keyword>